<accession>Q7M962</accession>
<accession>Q8GBG1</accession>
<reference key="1">
    <citation type="journal article" date="2003" name="Mol. Microbiol.">
        <title>Electron transport to periplasmic nitrate reductase (NapA) of Wolinella succinogenes is independent of a NapC protein.</title>
        <authorList>
            <person name="Simon J."/>
            <person name="Saenger M."/>
            <person name="Schuster S.C."/>
            <person name="Gross R."/>
        </authorList>
    </citation>
    <scope>NUCLEOTIDE SEQUENCE [GENOMIC DNA]</scope>
</reference>
<reference key="2">
    <citation type="journal article" date="2003" name="Proc. Natl. Acad. Sci. U.S.A.">
        <title>Complete genome sequence and analysis of Wolinella succinogenes.</title>
        <authorList>
            <person name="Baar C."/>
            <person name="Eppinger M."/>
            <person name="Raddatz G."/>
            <person name="Simon J."/>
            <person name="Lanz C."/>
            <person name="Klimmek O."/>
            <person name="Nandakumar R."/>
            <person name="Gross R."/>
            <person name="Rosinus A."/>
            <person name="Keller H."/>
            <person name="Jagtap P."/>
            <person name="Linke B."/>
            <person name="Meyer F."/>
            <person name="Lederer H."/>
            <person name="Schuster S.C."/>
        </authorList>
    </citation>
    <scope>NUCLEOTIDE SEQUENCE [LARGE SCALE GENOMIC DNA]</scope>
    <source>
        <strain>ATCC 29543 / DSM 1740 / CCUG 13145 / JCM 31913 / LMG 7466 / NCTC 11488 / FDC 602W</strain>
    </source>
</reference>
<proteinExistence type="inferred from homology"/>
<sequence length="928" mass="104968">MAFSRREFLKSAAAASAASAVGMSVPSQLLAQAQEGEKGWRWDKSVCRFCGTGCGIMVATKNDQIVAVKGDPAAPVNRGLNCIKGYFNAKIMYGADRLTDPLLRVNEKGEFDKQGKFKPVSWKKAFDVMEAQFKRAYNELGPTGIGVFGSGQYTIQEGYMAAKLIKGGFRSNNLDPNARHCMASAVAAFMETFGIDEPAGCYDDIELTDTIITWGANMAEMHPILWARVTDKKLSNPDKVKVINLSTYTNRTSDLADIEIIFTPQTDLAIWNYIAREIVYNHPESIDMEFVKNHCIFTTGFTDIGYGMRTDIKHAKYDPKELDIAAKERSKVLSEAEGVTLRYLGMKAGDVMEMKHNATAGNHWEITFEDFKKALEPYTLDFVAKLAKGNSEESLESFKEKLQKLANLYIEKERKVVSFWTMGMNQHTRGTWVNEQSYMVHFLLGKQAKPGSGAFSLTGQPSACGTAREVGTFSHRLPADMVVANPKHRAVSEKIWKLPEGTLNPKMGAHYMNIMRDLEDGKIKFAWIQVNNPWQNTANANHWIKAAREMDNFIVCSDAYPGISAKVADLILPTAMIYEKWGAYGNAERRTQHWRQQVVPVGNAMPDVWQMAEFSKRFKLKEVWGAKKIDDKLTLPDVLEKAKAMGYSPEDTLFEVLFANSEAKSFKAKDPIGEGFENTEVFGDRRNVAGSDGEVFKGYGFFIHKYLWEEYRRFGNGHGHDLADFDTYHKVRGLKWPVVDGKETQWRFNAKYDPYARKAGSGEFAFYGDAMKELPRGDLLSPKTEEKFKLTNKAKIFFRPYMDPPEMPSSEYPLWLCTGRVLEHWHSGTMTMRVPELYRAVPEALCYMHPEDAKKLGVKQNEAVWVESRRGKVKARVDTRGRNRTPLGLVYVPWFDEKVYINKVCLDATCPISKQTDFKKCAVKVYKA</sequence>
<feature type="signal peptide" description="Tat-type signal" evidence="1">
    <location>
        <begin position="1"/>
        <end position="33"/>
    </location>
</feature>
<feature type="chain" id="PRO_0000046014" description="Periplasmic nitrate reductase" evidence="1">
    <location>
        <begin position="34"/>
        <end position="928"/>
    </location>
</feature>
<feature type="domain" description="4Fe-4S Mo/W bis-MGD-type" evidence="1">
    <location>
        <begin position="40"/>
        <end position="96"/>
    </location>
</feature>
<feature type="binding site" evidence="1">
    <location>
        <position position="47"/>
    </location>
    <ligand>
        <name>[4Fe-4S] cluster</name>
        <dbReference type="ChEBI" id="CHEBI:49883"/>
    </ligand>
</feature>
<feature type="binding site" evidence="1">
    <location>
        <position position="50"/>
    </location>
    <ligand>
        <name>[4Fe-4S] cluster</name>
        <dbReference type="ChEBI" id="CHEBI:49883"/>
    </ligand>
</feature>
<feature type="binding site" evidence="1">
    <location>
        <position position="54"/>
    </location>
    <ligand>
        <name>[4Fe-4S] cluster</name>
        <dbReference type="ChEBI" id="CHEBI:49883"/>
    </ligand>
</feature>
<feature type="binding site" evidence="1">
    <location>
        <position position="82"/>
    </location>
    <ligand>
        <name>[4Fe-4S] cluster</name>
        <dbReference type="ChEBI" id="CHEBI:49883"/>
    </ligand>
</feature>
<feature type="binding site" evidence="1">
    <location>
        <position position="84"/>
    </location>
    <ligand>
        <name>Mo-bis(molybdopterin guanine dinucleotide)</name>
        <dbReference type="ChEBI" id="CHEBI:60539"/>
    </ligand>
</feature>
<feature type="binding site" evidence="1">
    <location>
        <position position="152"/>
    </location>
    <ligand>
        <name>Mo-bis(molybdopterin guanine dinucleotide)</name>
        <dbReference type="ChEBI" id="CHEBI:60539"/>
    </ligand>
</feature>
<feature type="binding site" evidence="1">
    <location>
        <position position="177"/>
    </location>
    <ligand>
        <name>Mo-bis(molybdopterin guanine dinucleotide)</name>
        <dbReference type="ChEBI" id="CHEBI:60539"/>
    </ligand>
</feature>
<feature type="binding site" evidence="1">
    <location>
        <position position="181"/>
    </location>
    <ligand>
        <name>Mo-bis(molybdopterin guanine dinucleotide)</name>
        <dbReference type="ChEBI" id="CHEBI:60539"/>
    </ligand>
</feature>
<feature type="binding site" evidence="1">
    <location>
        <begin position="214"/>
        <end position="221"/>
    </location>
    <ligand>
        <name>Mo-bis(molybdopterin guanine dinucleotide)</name>
        <dbReference type="ChEBI" id="CHEBI:60539"/>
    </ligand>
</feature>
<feature type="binding site" evidence="1">
    <location>
        <begin position="265"/>
        <end position="267"/>
    </location>
    <ligand>
        <name>Mo-bis(molybdopterin guanine dinucleotide)</name>
        <dbReference type="ChEBI" id="CHEBI:60539"/>
    </ligand>
</feature>
<feature type="binding site" evidence="1">
    <location>
        <position position="422"/>
    </location>
    <ligand>
        <name>Mo-bis(molybdopterin guanine dinucleotide)</name>
        <dbReference type="ChEBI" id="CHEBI:60539"/>
    </ligand>
</feature>
<feature type="binding site" evidence="1">
    <location>
        <position position="426"/>
    </location>
    <ligand>
        <name>Mo-bis(molybdopterin guanine dinucleotide)</name>
        <dbReference type="ChEBI" id="CHEBI:60539"/>
    </ligand>
</feature>
<feature type="binding site" evidence="1">
    <location>
        <position position="532"/>
    </location>
    <ligand>
        <name>Mo-bis(molybdopterin guanine dinucleotide)</name>
        <dbReference type="ChEBI" id="CHEBI:60539"/>
    </ligand>
</feature>
<feature type="binding site" evidence="1">
    <location>
        <begin position="557"/>
        <end position="558"/>
    </location>
    <ligand>
        <name>Mo-bis(molybdopterin guanine dinucleotide)</name>
        <dbReference type="ChEBI" id="CHEBI:60539"/>
    </ligand>
</feature>
<feature type="binding site" evidence="1">
    <location>
        <position position="580"/>
    </location>
    <ligand>
        <name>Mo-bis(molybdopterin guanine dinucleotide)</name>
        <dbReference type="ChEBI" id="CHEBI:60539"/>
    </ligand>
</feature>
<feature type="binding site" evidence="1">
    <location>
        <position position="607"/>
    </location>
    <ligand>
        <name>Mo-bis(molybdopterin guanine dinucleotide)</name>
        <dbReference type="ChEBI" id="CHEBI:60539"/>
    </ligand>
</feature>
<feature type="binding site" evidence="1">
    <location>
        <begin position="818"/>
        <end position="827"/>
    </location>
    <ligand>
        <name>Mo-bis(molybdopterin guanine dinucleotide)</name>
        <dbReference type="ChEBI" id="CHEBI:60539"/>
    </ligand>
</feature>
<feature type="binding site" evidence="1">
    <location>
        <position position="894"/>
    </location>
    <ligand>
        <name>substrate</name>
    </ligand>
</feature>
<feature type="binding site" evidence="1">
    <location>
        <position position="902"/>
    </location>
    <ligand>
        <name>Mo-bis(molybdopterin guanine dinucleotide)</name>
        <dbReference type="ChEBI" id="CHEBI:60539"/>
    </ligand>
</feature>
<feature type="binding site" evidence="1">
    <location>
        <position position="919"/>
    </location>
    <ligand>
        <name>Mo-bis(molybdopterin guanine dinucleotide)</name>
        <dbReference type="ChEBI" id="CHEBI:60539"/>
    </ligand>
</feature>
<dbReference type="EC" id="1.9.6.1" evidence="1"/>
<dbReference type="EMBL" id="AJ512686">
    <property type="protein sequence ID" value="CAD55547.1"/>
    <property type="molecule type" value="Genomic_DNA"/>
</dbReference>
<dbReference type="EMBL" id="BX571660">
    <property type="protein sequence ID" value="CAE10263.1"/>
    <property type="status" value="ALT_INIT"/>
    <property type="molecule type" value="Genomic_DNA"/>
</dbReference>
<dbReference type="RefSeq" id="WP_041572131.1">
    <property type="nucleotide sequence ID" value="NC_005090.1"/>
</dbReference>
<dbReference type="SMR" id="Q7M962"/>
<dbReference type="STRING" id="273121.WS1178"/>
<dbReference type="KEGG" id="wsu:WS1178"/>
<dbReference type="eggNOG" id="COG0243">
    <property type="taxonomic scope" value="Bacteria"/>
</dbReference>
<dbReference type="HOGENOM" id="CLU_000422_13_4_7"/>
<dbReference type="Proteomes" id="UP000000422">
    <property type="component" value="Chromosome"/>
</dbReference>
<dbReference type="GO" id="GO:0016020">
    <property type="term" value="C:membrane"/>
    <property type="evidence" value="ECO:0007669"/>
    <property type="project" value="TreeGrafter"/>
</dbReference>
<dbReference type="GO" id="GO:0009325">
    <property type="term" value="C:nitrate reductase complex"/>
    <property type="evidence" value="ECO:0007669"/>
    <property type="project" value="TreeGrafter"/>
</dbReference>
<dbReference type="GO" id="GO:0042597">
    <property type="term" value="C:periplasmic space"/>
    <property type="evidence" value="ECO:0007669"/>
    <property type="project" value="UniProtKB-SubCell"/>
</dbReference>
<dbReference type="GO" id="GO:0051539">
    <property type="term" value="F:4 iron, 4 sulfur cluster binding"/>
    <property type="evidence" value="ECO:0007669"/>
    <property type="project" value="UniProtKB-KW"/>
</dbReference>
<dbReference type="GO" id="GO:0009055">
    <property type="term" value="F:electron transfer activity"/>
    <property type="evidence" value="ECO:0007669"/>
    <property type="project" value="UniProtKB-UniRule"/>
</dbReference>
<dbReference type="GO" id="GO:0005506">
    <property type="term" value="F:iron ion binding"/>
    <property type="evidence" value="ECO:0007669"/>
    <property type="project" value="UniProtKB-UniRule"/>
</dbReference>
<dbReference type="GO" id="GO:0030151">
    <property type="term" value="F:molybdenum ion binding"/>
    <property type="evidence" value="ECO:0007669"/>
    <property type="project" value="InterPro"/>
</dbReference>
<dbReference type="GO" id="GO:0043546">
    <property type="term" value="F:molybdopterin cofactor binding"/>
    <property type="evidence" value="ECO:0007669"/>
    <property type="project" value="InterPro"/>
</dbReference>
<dbReference type="GO" id="GO:0050140">
    <property type="term" value="F:nitrate reductase (cytochrome) activity"/>
    <property type="evidence" value="ECO:0007669"/>
    <property type="project" value="UniProtKB-EC"/>
</dbReference>
<dbReference type="GO" id="GO:0006777">
    <property type="term" value="P:Mo-molybdopterin cofactor biosynthetic process"/>
    <property type="evidence" value="ECO:0007669"/>
    <property type="project" value="UniProtKB-UniRule"/>
</dbReference>
<dbReference type="GO" id="GO:0042128">
    <property type="term" value="P:nitrate assimilation"/>
    <property type="evidence" value="ECO:0007669"/>
    <property type="project" value="UniProtKB-UniRule"/>
</dbReference>
<dbReference type="CDD" id="cd02791">
    <property type="entry name" value="MopB_CT_Nitrate-R-NapA-like"/>
    <property type="match status" value="1"/>
</dbReference>
<dbReference type="CDD" id="cd02754">
    <property type="entry name" value="MopB_Nitrate-R-NapA-like"/>
    <property type="match status" value="1"/>
</dbReference>
<dbReference type="FunFam" id="2.40.40.20:FF:000005">
    <property type="entry name" value="Periplasmic nitrate reductase"/>
    <property type="match status" value="1"/>
</dbReference>
<dbReference type="Gene3D" id="2.40.40.20">
    <property type="match status" value="1"/>
</dbReference>
<dbReference type="Gene3D" id="3.30.200.210">
    <property type="match status" value="1"/>
</dbReference>
<dbReference type="Gene3D" id="3.40.50.740">
    <property type="match status" value="2"/>
</dbReference>
<dbReference type="Gene3D" id="2.20.25.90">
    <property type="entry name" value="ADC-like domains"/>
    <property type="match status" value="1"/>
</dbReference>
<dbReference type="Gene3D" id="3.40.228.10">
    <property type="entry name" value="Dimethylsulfoxide Reductase, domain 2"/>
    <property type="match status" value="2"/>
</dbReference>
<dbReference type="HAMAP" id="MF_01630">
    <property type="entry name" value="Nitrate_reduct_NapA"/>
    <property type="match status" value="1"/>
</dbReference>
<dbReference type="InterPro" id="IPR009010">
    <property type="entry name" value="Asp_de-COase-like_dom_sf"/>
</dbReference>
<dbReference type="InterPro" id="IPR041957">
    <property type="entry name" value="CT_Nitrate-R-NapA-like"/>
</dbReference>
<dbReference type="InterPro" id="IPR006657">
    <property type="entry name" value="MoPterin_dinucl-bd_dom"/>
</dbReference>
<dbReference type="InterPro" id="IPR006656">
    <property type="entry name" value="Mopterin_OxRdtase"/>
</dbReference>
<dbReference type="InterPro" id="IPR006963">
    <property type="entry name" value="Mopterin_OxRdtase_4Fe-4S_dom"/>
</dbReference>
<dbReference type="InterPro" id="IPR027467">
    <property type="entry name" value="MopterinOxRdtase_cofactor_BS"/>
</dbReference>
<dbReference type="InterPro" id="IPR010051">
    <property type="entry name" value="Periplasm_NO3_reductase_lsu"/>
</dbReference>
<dbReference type="InterPro" id="IPR050123">
    <property type="entry name" value="Prok_molybdopt-oxidoreductase"/>
</dbReference>
<dbReference type="InterPro" id="IPR006311">
    <property type="entry name" value="TAT_signal"/>
</dbReference>
<dbReference type="NCBIfam" id="TIGR01706">
    <property type="entry name" value="NAPA"/>
    <property type="match status" value="1"/>
</dbReference>
<dbReference type="NCBIfam" id="NF010055">
    <property type="entry name" value="PRK13532.1"/>
    <property type="match status" value="1"/>
</dbReference>
<dbReference type="PANTHER" id="PTHR43105:SF11">
    <property type="entry name" value="PERIPLASMIC NITRATE REDUCTASE"/>
    <property type="match status" value="1"/>
</dbReference>
<dbReference type="PANTHER" id="PTHR43105">
    <property type="entry name" value="RESPIRATORY NITRATE REDUCTASE"/>
    <property type="match status" value="1"/>
</dbReference>
<dbReference type="Pfam" id="PF04879">
    <property type="entry name" value="Molybdop_Fe4S4"/>
    <property type="match status" value="1"/>
</dbReference>
<dbReference type="Pfam" id="PF00384">
    <property type="entry name" value="Molybdopterin"/>
    <property type="match status" value="1"/>
</dbReference>
<dbReference type="Pfam" id="PF01568">
    <property type="entry name" value="Molydop_binding"/>
    <property type="match status" value="1"/>
</dbReference>
<dbReference type="SMART" id="SM00926">
    <property type="entry name" value="Molybdop_Fe4S4"/>
    <property type="match status" value="1"/>
</dbReference>
<dbReference type="SUPFAM" id="SSF50692">
    <property type="entry name" value="ADC-like"/>
    <property type="match status" value="1"/>
</dbReference>
<dbReference type="SUPFAM" id="SSF53706">
    <property type="entry name" value="Formate dehydrogenase/DMSO reductase, domains 1-3"/>
    <property type="match status" value="1"/>
</dbReference>
<dbReference type="PROSITE" id="PS51669">
    <property type="entry name" value="4FE4S_MOW_BIS_MGD"/>
    <property type="match status" value="1"/>
</dbReference>
<dbReference type="PROSITE" id="PS00551">
    <property type="entry name" value="MOLYBDOPTERIN_PROK_1"/>
    <property type="match status" value="1"/>
</dbReference>
<dbReference type="PROSITE" id="PS51318">
    <property type="entry name" value="TAT"/>
    <property type="match status" value="1"/>
</dbReference>
<comment type="function">
    <text evidence="1">Catalytic subunit of the periplasmic nitrate reductase complex NapAB. Receives electrons from NapB and catalyzes the reduction of nitrate to nitrite.</text>
</comment>
<comment type="catalytic activity">
    <reaction evidence="1">
        <text>2 Fe(II)-[cytochrome] + nitrate + 2 H(+) = 2 Fe(III)-[cytochrome] + nitrite + H2O</text>
        <dbReference type="Rhea" id="RHEA:12909"/>
        <dbReference type="Rhea" id="RHEA-COMP:11777"/>
        <dbReference type="Rhea" id="RHEA-COMP:11778"/>
        <dbReference type="ChEBI" id="CHEBI:15377"/>
        <dbReference type="ChEBI" id="CHEBI:15378"/>
        <dbReference type="ChEBI" id="CHEBI:16301"/>
        <dbReference type="ChEBI" id="CHEBI:17632"/>
        <dbReference type="ChEBI" id="CHEBI:29033"/>
        <dbReference type="ChEBI" id="CHEBI:29034"/>
        <dbReference type="EC" id="1.9.6.1"/>
    </reaction>
</comment>
<comment type="cofactor">
    <cofactor evidence="1">
        <name>[4Fe-4S] cluster</name>
        <dbReference type="ChEBI" id="CHEBI:49883"/>
    </cofactor>
    <text evidence="1">Binds 1 [4Fe-4S] cluster.</text>
</comment>
<comment type="cofactor">
    <cofactor evidence="1">
        <name>Mo-bis(molybdopterin guanine dinucleotide)</name>
        <dbReference type="ChEBI" id="CHEBI:60539"/>
    </cofactor>
    <text evidence="1">Binds 1 molybdenum-bis(molybdopterin guanine dinucleotide) (Mo-bis-MGD) cofactor per subunit.</text>
</comment>
<comment type="subunit">
    <text evidence="1">Component of the periplasmic nitrate reductase NapAB complex composed of NapA and NapB.</text>
</comment>
<comment type="subcellular location">
    <subcellularLocation>
        <location evidence="1">Periplasm</location>
    </subcellularLocation>
</comment>
<comment type="PTM">
    <text evidence="1">Predicted to be exported by the Tat system. The position of the signal peptide cleavage has not been experimentally proven.</text>
</comment>
<comment type="similarity">
    <text evidence="1">Belongs to the prokaryotic molybdopterin-containing oxidoreductase family. NasA/NapA/NarB subfamily.</text>
</comment>
<comment type="sequence caution" evidence="2">
    <conflict type="erroneous initiation">
        <sequence resource="EMBL-CDS" id="CAE10263"/>
    </conflict>
</comment>
<gene>
    <name evidence="1" type="primary">napA</name>
    <name type="ordered locus">WS1178</name>
</gene>
<protein>
    <recommendedName>
        <fullName evidence="1">Periplasmic nitrate reductase</fullName>
        <ecNumber evidence="1">1.9.6.1</ecNumber>
    </recommendedName>
</protein>
<keyword id="KW-0004">4Fe-4S</keyword>
<keyword id="KW-0249">Electron transport</keyword>
<keyword id="KW-0408">Iron</keyword>
<keyword id="KW-0411">Iron-sulfur</keyword>
<keyword id="KW-0479">Metal-binding</keyword>
<keyword id="KW-0500">Molybdenum</keyword>
<keyword id="KW-0534">Nitrate assimilation</keyword>
<keyword id="KW-0560">Oxidoreductase</keyword>
<keyword id="KW-0574">Periplasm</keyword>
<keyword id="KW-1185">Reference proteome</keyword>
<keyword id="KW-0732">Signal</keyword>
<keyword id="KW-0813">Transport</keyword>
<organism>
    <name type="scientific">Wolinella succinogenes (strain ATCC 29543 / DSM 1740 / CCUG 13145 / JCM 31913 / LMG 7466 / NCTC 11488 / FDC 602W)</name>
    <name type="common">Vibrio succinogenes</name>
    <dbReference type="NCBI Taxonomy" id="273121"/>
    <lineage>
        <taxon>Bacteria</taxon>
        <taxon>Pseudomonadati</taxon>
        <taxon>Campylobacterota</taxon>
        <taxon>Epsilonproteobacteria</taxon>
        <taxon>Campylobacterales</taxon>
        <taxon>Helicobacteraceae</taxon>
        <taxon>Wolinella</taxon>
    </lineage>
</organism>
<name>NAPA_WOLSU</name>
<evidence type="ECO:0000255" key="1">
    <source>
        <dbReference type="HAMAP-Rule" id="MF_01630"/>
    </source>
</evidence>
<evidence type="ECO:0000305" key="2"/>